<proteinExistence type="evidence at protein level"/>
<organism>
    <name type="scientific">Homo sapiens</name>
    <name type="common">Human</name>
    <dbReference type="NCBI Taxonomy" id="9606"/>
    <lineage>
        <taxon>Eukaryota</taxon>
        <taxon>Metazoa</taxon>
        <taxon>Chordata</taxon>
        <taxon>Craniata</taxon>
        <taxon>Vertebrata</taxon>
        <taxon>Euteleostomi</taxon>
        <taxon>Mammalia</taxon>
        <taxon>Eutheria</taxon>
        <taxon>Euarchontoglires</taxon>
        <taxon>Primates</taxon>
        <taxon>Haplorrhini</taxon>
        <taxon>Catarrhini</taxon>
        <taxon>Hominidae</taxon>
        <taxon>Homo</taxon>
    </lineage>
</organism>
<protein>
    <recommendedName>
        <fullName evidence="6">Homeobox protein EMX1</fullName>
    </recommendedName>
    <alternativeName>
        <fullName>Empty spiracles homolog 1</fullName>
    </alternativeName>
    <alternativeName>
        <fullName>Empty spiracles-like protein 1</fullName>
    </alternativeName>
</protein>
<accession>Q04741</accession>
<accession>Q0D2P0</accession>
<accession>Q53T30</accession>
<accession>Q86XB0</accession>
<name>EMX1_HUMAN</name>
<reference key="1">
    <citation type="journal article" date="2005" name="Nature">
        <title>Generation and annotation of the DNA sequences of human chromosomes 2 and 4.</title>
        <authorList>
            <person name="Hillier L.W."/>
            <person name="Graves T.A."/>
            <person name="Fulton R.S."/>
            <person name="Fulton L.A."/>
            <person name="Pepin K.H."/>
            <person name="Minx P."/>
            <person name="Wagner-McPherson C."/>
            <person name="Layman D."/>
            <person name="Wylie K."/>
            <person name="Sekhon M."/>
            <person name="Becker M.C."/>
            <person name="Fewell G.A."/>
            <person name="Delehaunty K.D."/>
            <person name="Miner T.L."/>
            <person name="Nash W.E."/>
            <person name="Kremitzki C."/>
            <person name="Oddy L."/>
            <person name="Du H."/>
            <person name="Sun H."/>
            <person name="Bradshaw-Cordum H."/>
            <person name="Ali J."/>
            <person name="Carter J."/>
            <person name="Cordes M."/>
            <person name="Harris A."/>
            <person name="Isak A."/>
            <person name="van Brunt A."/>
            <person name="Nguyen C."/>
            <person name="Du F."/>
            <person name="Courtney L."/>
            <person name="Kalicki J."/>
            <person name="Ozersky P."/>
            <person name="Abbott S."/>
            <person name="Armstrong J."/>
            <person name="Belter E.A."/>
            <person name="Caruso L."/>
            <person name="Cedroni M."/>
            <person name="Cotton M."/>
            <person name="Davidson T."/>
            <person name="Desai A."/>
            <person name="Elliott G."/>
            <person name="Erb T."/>
            <person name="Fronick C."/>
            <person name="Gaige T."/>
            <person name="Haakenson W."/>
            <person name="Haglund K."/>
            <person name="Holmes A."/>
            <person name="Harkins R."/>
            <person name="Kim K."/>
            <person name="Kruchowski S.S."/>
            <person name="Strong C.M."/>
            <person name="Grewal N."/>
            <person name="Goyea E."/>
            <person name="Hou S."/>
            <person name="Levy A."/>
            <person name="Martinka S."/>
            <person name="Mead K."/>
            <person name="McLellan M.D."/>
            <person name="Meyer R."/>
            <person name="Randall-Maher J."/>
            <person name="Tomlinson C."/>
            <person name="Dauphin-Kohlberg S."/>
            <person name="Kozlowicz-Reilly A."/>
            <person name="Shah N."/>
            <person name="Swearengen-Shahid S."/>
            <person name="Snider J."/>
            <person name="Strong J.T."/>
            <person name="Thompson J."/>
            <person name="Yoakum M."/>
            <person name="Leonard S."/>
            <person name="Pearman C."/>
            <person name="Trani L."/>
            <person name="Radionenko M."/>
            <person name="Waligorski J.E."/>
            <person name="Wang C."/>
            <person name="Rock S.M."/>
            <person name="Tin-Wollam A.-M."/>
            <person name="Maupin R."/>
            <person name="Latreille P."/>
            <person name="Wendl M.C."/>
            <person name="Yang S.-P."/>
            <person name="Pohl C."/>
            <person name="Wallis J.W."/>
            <person name="Spieth J."/>
            <person name="Bieri T.A."/>
            <person name="Berkowicz N."/>
            <person name="Nelson J.O."/>
            <person name="Osborne J."/>
            <person name="Ding L."/>
            <person name="Meyer R."/>
            <person name="Sabo A."/>
            <person name="Shotland Y."/>
            <person name="Sinha P."/>
            <person name="Wohldmann P.E."/>
            <person name="Cook L.L."/>
            <person name="Hickenbotham M.T."/>
            <person name="Eldred J."/>
            <person name="Williams D."/>
            <person name="Jones T.A."/>
            <person name="She X."/>
            <person name="Ciccarelli F.D."/>
            <person name="Izaurralde E."/>
            <person name="Taylor J."/>
            <person name="Schmutz J."/>
            <person name="Myers R.M."/>
            <person name="Cox D.R."/>
            <person name="Huang X."/>
            <person name="McPherson J.D."/>
            <person name="Mardis E.R."/>
            <person name="Clifton S.W."/>
            <person name="Warren W.C."/>
            <person name="Chinwalla A.T."/>
            <person name="Eddy S.R."/>
            <person name="Marra M.A."/>
            <person name="Ovcharenko I."/>
            <person name="Furey T.S."/>
            <person name="Miller W."/>
            <person name="Eichler E.E."/>
            <person name="Bork P."/>
            <person name="Suyama M."/>
            <person name="Torrents D."/>
            <person name="Waterston R.H."/>
            <person name="Wilson R.K."/>
        </authorList>
    </citation>
    <scope>NUCLEOTIDE SEQUENCE [LARGE SCALE GENOMIC DNA]</scope>
</reference>
<reference key="2">
    <citation type="journal article" date="2004" name="Genome Res.">
        <title>The status, quality, and expansion of the NIH full-length cDNA project: the Mammalian Gene Collection (MGC).</title>
        <authorList>
            <consortium name="The MGC Project Team"/>
        </authorList>
    </citation>
    <scope>NUCLEOTIDE SEQUENCE [LARGE SCALE MRNA] (ISOFORMS 1 AND 2)</scope>
    <source>
        <tissue>Brain</tissue>
    </source>
</reference>
<reference key="3">
    <citation type="journal article" date="1992" name="EMBO J.">
        <title>Two vertebrate homeobox genes related to the Drosophila empty spiracles gene are expressed in the embryonic cerebral cortex.</title>
        <authorList>
            <person name="Simeone A."/>
            <person name="Gulisano M."/>
            <person name="Acampora D."/>
            <person name="Stornaiuolo A."/>
            <person name="Rambaldi M."/>
            <person name="Boncinelli E."/>
        </authorList>
    </citation>
    <scope>NUCLEOTIDE SEQUENCE [MRNA] OF 171-290</scope>
</reference>
<reference key="4">
    <citation type="journal article" date="2010" name="Am. J. Hum. Genet.">
        <title>WDR11, a WD protein that interacts with transcription factor EMX1, is mutated in idiopathic hypogonadotropic hypogonadism and Kallmann syndrome.</title>
        <authorList>
            <person name="Kim H.G."/>
            <person name="Ahn J.W."/>
            <person name="Kurth I."/>
            <person name="Ullmann R."/>
            <person name="Kim H.T."/>
            <person name="Kulharya A."/>
            <person name="Ha K.S."/>
            <person name="Itokawa Y."/>
            <person name="Meliciani I."/>
            <person name="Wenzel W."/>
            <person name="Lee D."/>
            <person name="Rosenberger G."/>
            <person name="Ozata M."/>
            <person name="Bick D.P."/>
            <person name="Sherins R.J."/>
            <person name="Nagase T."/>
            <person name="Tekin M."/>
            <person name="Kim S.H."/>
            <person name="Kim C.H."/>
            <person name="Ropers H.H."/>
            <person name="Gusella J.F."/>
            <person name="Kalscheuer V."/>
            <person name="Choi C.Y."/>
            <person name="Layman L.C."/>
        </authorList>
    </citation>
    <scope>SUBCELLULAR LOCATION</scope>
    <scope>INTERACTION WITH WRD11</scope>
</reference>
<reference key="5">
    <citation type="journal article" date="2018" name="EMBO Rep.">
        <title>WDR11-mediated Hedgehog signalling defects underlie a new ciliopathy related to Kallmann syndrome.</title>
        <authorList>
            <person name="Kim Y.J."/>
            <person name="Osborn D.P."/>
            <person name="Lee J.Y."/>
            <person name="Araki M."/>
            <person name="Araki K."/>
            <person name="Mohun T."/>
            <person name="Kaensaekoski J."/>
            <person name="Brandstack N."/>
            <person name="Kim H.T."/>
            <person name="Miralles F."/>
            <person name="Kim C.H."/>
            <person name="Brown N.A."/>
            <person name="Kim H.G."/>
            <person name="Martinez-Barbera J.P."/>
            <person name="Ataliotis P."/>
            <person name="Raivio T."/>
            <person name="Layman L.C."/>
            <person name="Kim S.H."/>
        </authorList>
    </citation>
    <scope>INTERACTION WITH WDR11</scope>
</reference>
<evidence type="ECO:0000255" key="1">
    <source>
        <dbReference type="PROSITE-ProRule" id="PRU00108"/>
    </source>
</evidence>
<evidence type="ECO:0000256" key="2">
    <source>
        <dbReference type="SAM" id="MobiDB-lite"/>
    </source>
</evidence>
<evidence type="ECO:0000269" key="3">
    <source>
    </source>
</evidence>
<evidence type="ECO:0000269" key="4">
    <source>
    </source>
</evidence>
<evidence type="ECO:0000303" key="5">
    <source>
    </source>
</evidence>
<evidence type="ECO:0000305" key="6"/>
<evidence type="ECO:0000312" key="7">
    <source>
        <dbReference type="HGNC" id="HGNC:3340"/>
    </source>
</evidence>
<dbReference type="EMBL" id="AC012366">
    <property type="protein sequence ID" value="AAY14744.1"/>
    <property type="molecule type" value="Genomic_DNA"/>
</dbReference>
<dbReference type="EMBL" id="BC037242">
    <property type="protein sequence ID" value="AAH37242.1"/>
    <property type="molecule type" value="mRNA"/>
</dbReference>
<dbReference type="EMBL" id="BC045762">
    <property type="protein sequence ID" value="AAH45762.2"/>
    <property type="molecule type" value="mRNA"/>
</dbReference>
<dbReference type="EMBL" id="X68879">
    <property type="protein sequence ID" value="CAA48750.1"/>
    <property type="molecule type" value="mRNA"/>
</dbReference>
<dbReference type="CCDS" id="CCDS1921.2">
    <molecule id="Q04741-1"/>
</dbReference>
<dbReference type="PIR" id="S22721">
    <property type="entry name" value="S22721"/>
</dbReference>
<dbReference type="RefSeq" id="NP_004088.2">
    <molecule id="Q04741-1"/>
    <property type="nucleotide sequence ID" value="NM_004097.3"/>
</dbReference>
<dbReference type="RefSeq" id="XP_011530999.1">
    <molecule id="Q04741-2"/>
    <property type="nucleotide sequence ID" value="XM_011532697.4"/>
</dbReference>
<dbReference type="RefSeq" id="XP_054196989.1">
    <molecule id="Q04741-2"/>
    <property type="nucleotide sequence ID" value="XM_054341014.1"/>
</dbReference>
<dbReference type="SMR" id="Q04741"/>
<dbReference type="BioGRID" id="108331">
    <property type="interactions" value="9"/>
</dbReference>
<dbReference type="FunCoup" id="Q04741">
    <property type="interactions" value="1020"/>
</dbReference>
<dbReference type="IntAct" id="Q04741">
    <property type="interactions" value="9"/>
</dbReference>
<dbReference type="MINT" id="Q04741"/>
<dbReference type="STRING" id="9606.ENSP00000258106"/>
<dbReference type="BioMuta" id="EMX1"/>
<dbReference type="MassIVE" id="Q04741"/>
<dbReference type="PaxDb" id="9606-ENSP00000258106"/>
<dbReference type="PeptideAtlas" id="Q04741"/>
<dbReference type="ProteomicsDB" id="58275">
    <molecule id="Q04741-1"/>
</dbReference>
<dbReference type="ProteomicsDB" id="58276">
    <molecule id="Q04741-2"/>
</dbReference>
<dbReference type="Antibodypedia" id="1790">
    <property type="antibodies" value="194 antibodies from 29 providers"/>
</dbReference>
<dbReference type="DNASU" id="2016"/>
<dbReference type="Ensembl" id="ENST00000258106.11">
    <molecule id="Q04741-1"/>
    <property type="protein sequence ID" value="ENSP00000258106.6"/>
    <property type="gene ID" value="ENSG00000135638.14"/>
</dbReference>
<dbReference type="GeneID" id="2016"/>
<dbReference type="KEGG" id="hsa:2016"/>
<dbReference type="MANE-Select" id="ENST00000258106.11">
    <property type="protein sequence ID" value="ENSP00000258106.6"/>
    <property type="RefSeq nucleotide sequence ID" value="NM_004097.3"/>
    <property type="RefSeq protein sequence ID" value="NP_004088.2"/>
</dbReference>
<dbReference type="UCSC" id="uc002sin.1">
    <molecule id="Q04741-1"/>
    <property type="organism name" value="human"/>
</dbReference>
<dbReference type="AGR" id="HGNC:3340"/>
<dbReference type="CTD" id="2016"/>
<dbReference type="DisGeNET" id="2016"/>
<dbReference type="GeneCards" id="EMX1"/>
<dbReference type="HGNC" id="HGNC:3340">
    <property type="gene designation" value="EMX1"/>
</dbReference>
<dbReference type="HPA" id="ENSG00000135638">
    <property type="expression patterns" value="Group enriched (brain, kidney)"/>
</dbReference>
<dbReference type="MIM" id="600034">
    <property type="type" value="gene"/>
</dbReference>
<dbReference type="neXtProt" id="NX_Q04741"/>
<dbReference type="OpenTargets" id="ENSG00000135638"/>
<dbReference type="PharmGKB" id="PA27777"/>
<dbReference type="VEuPathDB" id="HostDB:ENSG00000135638"/>
<dbReference type="eggNOG" id="KOG0843">
    <property type="taxonomic scope" value="Eukaryota"/>
</dbReference>
<dbReference type="GeneTree" id="ENSGT00940000161476"/>
<dbReference type="HOGENOM" id="CLU_049668_1_0_1"/>
<dbReference type="InParanoid" id="Q04741"/>
<dbReference type="OMA" id="SPHPFFG"/>
<dbReference type="OrthoDB" id="6159439at2759"/>
<dbReference type="PAN-GO" id="Q04741">
    <property type="GO annotations" value="7 GO annotations based on evolutionary models"/>
</dbReference>
<dbReference type="PhylomeDB" id="Q04741"/>
<dbReference type="TreeFam" id="TF317015"/>
<dbReference type="PathwayCommons" id="Q04741"/>
<dbReference type="SignaLink" id="Q04741"/>
<dbReference type="SIGNOR" id="Q04741"/>
<dbReference type="BioGRID-ORCS" id="2016">
    <property type="hits" value="14 hits in 1174 CRISPR screens"/>
</dbReference>
<dbReference type="ChiTaRS" id="EMX1">
    <property type="organism name" value="human"/>
</dbReference>
<dbReference type="GeneWiki" id="EMX1"/>
<dbReference type="GenomeRNAi" id="2016"/>
<dbReference type="Pharos" id="Q04741">
    <property type="development level" value="Tbio"/>
</dbReference>
<dbReference type="PRO" id="PR:Q04741"/>
<dbReference type="Proteomes" id="UP000005640">
    <property type="component" value="Chromosome 2"/>
</dbReference>
<dbReference type="RNAct" id="Q04741">
    <property type="molecule type" value="protein"/>
</dbReference>
<dbReference type="Bgee" id="ENSG00000135638">
    <property type="expression patterns" value="Expressed in ganglionic eminence and 75 other cell types or tissues"/>
</dbReference>
<dbReference type="ExpressionAtlas" id="Q04741">
    <property type="expression patterns" value="baseline and differential"/>
</dbReference>
<dbReference type="GO" id="GO:0000785">
    <property type="term" value="C:chromatin"/>
    <property type="evidence" value="ECO:0000247"/>
    <property type="project" value="NTNU_SB"/>
</dbReference>
<dbReference type="GO" id="GO:0005694">
    <property type="term" value="C:chromosome"/>
    <property type="evidence" value="ECO:0000314"/>
    <property type="project" value="HPA"/>
</dbReference>
<dbReference type="GO" id="GO:0005737">
    <property type="term" value="C:cytoplasm"/>
    <property type="evidence" value="ECO:0007669"/>
    <property type="project" value="UniProtKB-SubCell"/>
</dbReference>
<dbReference type="GO" id="GO:0005730">
    <property type="term" value="C:nucleolus"/>
    <property type="evidence" value="ECO:0000314"/>
    <property type="project" value="HPA"/>
</dbReference>
<dbReference type="GO" id="GO:0005634">
    <property type="term" value="C:nucleus"/>
    <property type="evidence" value="ECO:0000314"/>
    <property type="project" value="MGI"/>
</dbReference>
<dbReference type="GO" id="GO:0000981">
    <property type="term" value="F:DNA-binding transcription factor activity, RNA polymerase II-specific"/>
    <property type="evidence" value="ECO:0000247"/>
    <property type="project" value="NTNU_SB"/>
</dbReference>
<dbReference type="GO" id="GO:0000978">
    <property type="term" value="F:RNA polymerase II cis-regulatory region sequence-specific DNA binding"/>
    <property type="evidence" value="ECO:0000318"/>
    <property type="project" value="GO_Central"/>
</dbReference>
<dbReference type="GO" id="GO:1990837">
    <property type="term" value="F:sequence-specific double-stranded DNA binding"/>
    <property type="evidence" value="ECO:0000314"/>
    <property type="project" value="ARUK-UCL"/>
</dbReference>
<dbReference type="GO" id="GO:0007420">
    <property type="term" value="P:brain development"/>
    <property type="evidence" value="ECO:0000318"/>
    <property type="project" value="GO_Central"/>
</dbReference>
<dbReference type="GO" id="GO:0048854">
    <property type="term" value="P:brain morphogenesis"/>
    <property type="evidence" value="ECO:0007669"/>
    <property type="project" value="Ensembl"/>
</dbReference>
<dbReference type="GO" id="GO:0007417">
    <property type="term" value="P:central nervous system development"/>
    <property type="evidence" value="ECO:0000318"/>
    <property type="project" value="GO_Central"/>
</dbReference>
<dbReference type="GO" id="GO:0021895">
    <property type="term" value="P:cerebral cortex neuron differentiation"/>
    <property type="evidence" value="ECO:0007669"/>
    <property type="project" value="Ensembl"/>
</dbReference>
<dbReference type="GO" id="GO:0021796">
    <property type="term" value="P:cerebral cortex regionalization"/>
    <property type="evidence" value="ECO:0007669"/>
    <property type="project" value="Ensembl"/>
</dbReference>
<dbReference type="GO" id="GO:0048872">
    <property type="term" value="P:homeostasis of number of cells"/>
    <property type="evidence" value="ECO:0007669"/>
    <property type="project" value="Ensembl"/>
</dbReference>
<dbReference type="GO" id="GO:0001701">
    <property type="term" value="P:in utero embryonic development"/>
    <property type="evidence" value="ECO:0007669"/>
    <property type="project" value="Ensembl"/>
</dbReference>
<dbReference type="GO" id="GO:0060563">
    <property type="term" value="P:neuroepithelial cell differentiation"/>
    <property type="evidence" value="ECO:0007669"/>
    <property type="project" value="Ensembl"/>
</dbReference>
<dbReference type="GO" id="GO:0030182">
    <property type="term" value="P:neuron differentiation"/>
    <property type="evidence" value="ECO:0000318"/>
    <property type="project" value="GO_Central"/>
</dbReference>
<dbReference type="GO" id="GO:1990138">
    <property type="term" value="P:neuron projection extension"/>
    <property type="evidence" value="ECO:0007669"/>
    <property type="project" value="Ensembl"/>
</dbReference>
<dbReference type="GO" id="GO:0009791">
    <property type="term" value="P:post-embryonic development"/>
    <property type="evidence" value="ECO:0007669"/>
    <property type="project" value="Ensembl"/>
</dbReference>
<dbReference type="GO" id="GO:0060019">
    <property type="term" value="P:radial glial cell differentiation"/>
    <property type="evidence" value="ECO:0007669"/>
    <property type="project" value="Ensembl"/>
</dbReference>
<dbReference type="GO" id="GO:0070445">
    <property type="term" value="P:regulation of oligodendrocyte progenitor proliferation"/>
    <property type="evidence" value="ECO:0007669"/>
    <property type="project" value="Ensembl"/>
</dbReference>
<dbReference type="GO" id="GO:0006357">
    <property type="term" value="P:regulation of transcription by RNA polymerase II"/>
    <property type="evidence" value="ECO:0000318"/>
    <property type="project" value="GO_Central"/>
</dbReference>
<dbReference type="GO" id="GO:0009410">
    <property type="term" value="P:response to xenobiotic stimulus"/>
    <property type="evidence" value="ECO:0007669"/>
    <property type="project" value="Ensembl"/>
</dbReference>
<dbReference type="CDD" id="cd00086">
    <property type="entry name" value="homeodomain"/>
    <property type="match status" value="1"/>
</dbReference>
<dbReference type="FunFam" id="1.10.10.60:FF:000299">
    <property type="entry name" value="Empty spiracles homeobox 3"/>
    <property type="match status" value="1"/>
</dbReference>
<dbReference type="Gene3D" id="1.10.10.60">
    <property type="entry name" value="Homeodomain-like"/>
    <property type="match status" value="1"/>
</dbReference>
<dbReference type="InterPro" id="IPR050877">
    <property type="entry name" value="EMX-VAX-Noto_Homeobox_TFs"/>
</dbReference>
<dbReference type="InterPro" id="IPR001356">
    <property type="entry name" value="HD"/>
</dbReference>
<dbReference type="InterPro" id="IPR020479">
    <property type="entry name" value="HD_metazoa"/>
</dbReference>
<dbReference type="InterPro" id="IPR017970">
    <property type="entry name" value="Homeobox_CS"/>
</dbReference>
<dbReference type="InterPro" id="IPR009057">
    <property type="entry name" value="Homeodomain-like_sf"/>
</dbReference>
<dbReference type="PANTHER" id="PTHR24339">
    <property type="entry name" value="HOMEOBOX PROTEIN EMX-RELATED"/>
    <property type="match status" value="1"/>
</dbReference>
<dbReference type="PANTHER" id="PTHR24339:SF26">
    <property type="entry name" value="HOMEOBOX PROTEIN EMX1"/>
    <property type="match status" value="1"/>
</dbReference>
<dbReference type="Pfam" id="PF00046">
    <property type="entry name" value="Homeodomain"/>
    <property type="match status" value="1"/>
</dbReference>
<dbReference type="PRINTS" id="PR00024">
    <property type="entry name" value="HOMEOBOX"/>
</dbReference>
<dbReference type="SMART" id="SM00389">
    <property type="entry name" value="HOX"/>
    <property type="match status" value="1"/>
</dbReference>
<dbReference type="SUPFAM" id="SSF46689">
    <property type="entry name" value="Homeodomain-like"/>
    <property type="match status" value="1"/>
</dbReference>
<dbReference type="PROSITE" id="PS00027">
    <property type="entry name" value="HOMEOBOX_1"/>
    <property type="match status" value="1"/>
</dbReference>
<dbReference type="PROSITE" id="PS50071">
    <property type="entry name" value="HOMEOBOX_2"/>
    <property type="match status" value="1"/>
</dbReference>
<sequence>MCLAGCTPRKAAAPGRGALPRARLPRTAPAAATMFQPAAKRGFTIESLVAKDGGTGGGTGGGGAGSHLLAAAASEEPLRPTALNYPHPSAAEAAFVSGFPAAAAAGAGRSLYGGPELVFPEAMNHPALTVHPAHQLGASPLQPPHSFFGAQHRDPLHFYPWVLRNRFFGHRFQASDVPQDGLLLHGPFARKPKRIRTAFSPSQLLRLERAFEKNHYVVGAERKQLAGSLSLSETQVKVWFQNRRTKYKRQKLEEEGPESEQKKKGSHHINRWRIATKQANGEDIDVTSND</sequence>
<comment type="function">
    <text>Transcription factor, which in cooperation with EMX2, acts to generate the boundary between the roof and archipallium in the developing brain. May function in combinations with OTX1/2 to specify cell fates in the developing central nervous system.</text>
</comment>
<comment type="subunit">
    <text evidence="4">Interacts with WRD11 (via the N-terminal and the central portion of the protein); the interaction associates EMX1 with GLI3.</text>
</comment>
<comment type="interaction">
    <interactant intactId="EBI-26568770">
        <id>Q04741</id>
    </interactant>
    <interactant intactId="EBI-26568850">
        <id>PRO_0000406137</id>
        <label>GLI3</label>
        <dbReference type="UniProtKB" id="P10071"/>
    </interactant>
    <organismsDiffer>false</organismsDiffer>
    <experiments>3</experiments>
</comment>
<comment type="interaction">
    <interactant intactId="EBI-26568770">
        <id>Q04741</id>
    </interactant>
    <interactant intactId="EBI-2009923">
        <id>Q9BZH6</id>
        <label>WDR11</label>
    </interactant>
    <organismsDiffer>false</organismsDiffer>
    <experiments>2</experiments>
</comment>
<comment type="subcellular location">
    <subcellularLocation>
        <location evidence="1 3">Nucleus</location>
    </subcellularLocation>
    <subcellularLocation>
        <location evidence="3">Cytoplasm</location>
    </subcellularLocation>
    <text>Might be shuttling between the nucleus and the cytoplasm.</text>
</comment>
<comment type="alternative products">
    <event type="alternative splicing"/>
    <isoform>
        <id>Q04741-1</id>
        <name>1</name>
        <sequence type="displayed"/>
    </isoform>
    <isoform>
        <id>Q04741-2</id>
        <name>2</name>
        <sequence type="described" ref="VSP_022145 VSP_022146"/>
    </isoform>
</comment>
<comment type="tissue specificity">
    <text>Cerebral cortex.</text>
</comment>
<comment type="similarity">
    <text evidence="6">Belongs to the EMX homeobox family.</text>
</comment>
<keyword id="KW-0025">Alternative splicing</keyword>
<keyword id="KW-0963">Cytoplasm</keyword>
<keyword id="KW-0217">Developmental protein</keyword>
<keyword id="KW-0238">DNA-binding</keyword>
<keyword id="KW-0371">Homeobox</keyword>
<keyword id="KW-0539">Nucleus</keyword>
<keyword id="KW-1267">Proteomics identification</keyword>
<keyword id="KW-1185">Reference proteome</keyword>
<feature type="chain" id="PRO_0000048866" description="Homeobox protein EMX1">
    <location>
        <begin position="1"/>
        <end position="290"/>
    </location>
</feature>
<feature type="DNA-binding region" description="Homeobox" evidence="1">
    <location>
        <begin position="192"/>
        <end position="251"/>
    </location>
</feature>
<feature type="region of interest" description="Disordered" evidence="2">
    <location>
        <begin position="249"/>
        <end position="290"/>
    </location>
</feature>
<feature type="compositionally biased region" description="Basic and acidic residues" evidence="2">
    <location>
        <begin position="250"/>
        <end position="263"/>
    </location>
</feature>
<feature type="splice variant" id="VSP_022145" description="In isoform 2." evidence="5">
    <location>
        <begin position="1"/>
        <end position="171"/>
    </location>
</feature>
<feature type="splice variant" id="VSP_022146" description="In isoform 2." evidence="5">
    <original>FQ</original>
    <variation>MV</variation>
    <location>
        <begin position="172"/>
        <end position="173"/>
    </location>
</feature>
<gene>
    <name evidence="7" type="primary">EMX1</name>
</gene>